<comment type="function">
    <text evidence="1">Part of the ABC transporter complex LptBFG involved in the translocation of lipopolysaccharide (LPS) from the inner membrane to the outer membrane.</text>
</comment>
<comment type="subunit">
    <text evidence="1">Component of the lipopolysaccharide transport and assembly complex. The LptBFG transporter is composed of two ATP-binding proteins (LptB) and two transmembrane proteins (LptF and LptG) (By similarity).</text>
</comment>
<comment type="subcellular location">
    <subcellularLocation>
        <location evidence="1">Cell inner membrane</location>
        <topology evidence="1">Multi-pass membrane protein</topology>
    </subcellularLocation>
</comment>
<comment type="similarity">
    <text evidence="3">Belongs to the LptF/LptG family.</text>
</comment>
<gene>
    <name type="primary">lptF</name>
    <name type="ordered locus">c5362</name>
</gene>
<name>LPTF_ECOL6</name>
<reference key="1">
    <citation type="journal article" date="2002" name="Proc. Natl. Acad. Sci. U.S.A.">
        <title>Extensive mosaic structure revealed by the complete genome sequence of uropathogenic Escherichia coli.</title>
        <authorList>
            <person name="Welch R.A."/>
            <person name="Burland V."/>
            <person name="Plunkett G. III"/>
            <person name="Redford P."/>
            <person name="Roesch P."/>
            <person name="Rasko D."/>
            <person name="Buckles E.L."/>
            <person name="Liou S.-R."/>
            <person name="Boutin A."/>
            <person name="Hackett J."/>
            <person name="Stroud D."/>
            <person name="Mayhew G.F."/>
            <person name="Rose D.J."/>
            <person name="Zhou S."/>
            <person name="Schwartz D.C."/>
            <person name="Perna N.T."/>
            <person name="Mobley H.L.T."/>
            <person name="Donnenberg M.S."/>
            <person name="Blattner F.R."/>
        </authorList>
    </citation>
    <scope>NUCLEOTIDE SEQUENCE [LARGE SCALE GENOMIC DNA]</scope>
    <source>
        <strain>CFT073 / ATCC 700928 / UPEC</strain>
    </source>
</reference>
<dbReference type="EMBL" id="AE014075">
    <property type="protein sequence ID" value="AAN83784.1"/>
    <property type="molecule type" value="Genomic_DNA"/>
</dbReference>
<dbReference type="RefSeq" id="WP_000584114.1">
    <property type="nucleotide sequence ID" value="NZ_CP051263.1"/>
</dbReference>
<dbReference type="SMR" id="P0AF99"/>
<dbReference type="STRING" id="199310.c5362"/>
<dbReference type="GeneID" id="75203518"/>
<dbReference type="KEGG" id="ecc:c5362"/>
<dbReference type="eggNOG" id="COG0795">
    <property type="taxonomic scope" value="Bacteria"/>
</dbReference>
<dbReference type="HOGENOM" id="CLU_028799_0_2_6"/>
<dbReference type="BioCyc" id="ECOL199310:C5362-MONOMER"/>
<dbReference type="Proteomes" id="UP000001410">
    <property type="component" value="Chromosome"/>
</dbReference>
<dbReference type="GO" id="GO:0043190">
    <property type="term" value="C:ATP-binding cassette (ABC) transporter complex"/>
    <property type="evidence" value="ECO:0007669"/>
    <property type="project" value="InterPro"/>
</dbReference>
<dbReference type="GO" id="GO:0015920">
    <property type="term" value="P:lipopolysaccharide transport"/>
    <property type="evidence" value="ECO:0007669"/>
    <property type="project" value="TreeGrafter"/>
</dbReference>
<dbReference type="GO" id="GO:0055085">
    <property type="term" value="P:transmembrane transport"/>
    <property type="evidence" value="ECO:0007669"/>
    <property type="project" value="InterPro"/>
</dbReference>
<dbReference type="InterPro" id="IPR030922">
    <property type="entry name" value="LptF"/>
</dbReference>
<dbReference type="InterPro" id="IPR005495">
    <property type="entry name" value="LptG/LptF_permease"/>
</dbReference>
<dbReference type="NCBIfam" id="TIGR04407">
    <property type="entry name" value="LptF_YjgP"/>
    <property type="match status" value="1"/>
</dbReference>
<dbReference type="PANTHER" id="PTHR33529:SF7">
    <property type="entry name" value="LIPOPOLYSACCHARIDE EXPORT SYSTEM PERMEASE PROTEIN LPTF"/>
    <property type="match status" value="1"/>
</dbReference>
<dbReference type="PANTHER" id="PTHR33529">
    <property type="entry name" value="SLR0882 PROTEIN-RELATED"/>
    <property type="match status" value="1"/>
</dbReference>
<dbReference type="Pfam" id="PF03739">
    <property type="entry name" value="LptF_LptG"/>
    <property type="match status" value="1"/>
</dbReference>
<keyword id="KW-0997">Cell inner membrane</keyword>
<keyword id="KW-1003">Cell membrane</keyword>
<keyword id="KW-0472">Membrane</keyword>
<keyword id="KW-1185">Reference proteome</keyword>
<keyword id="KW-0812">Transmembrane</keyword>
<keyword id="KW-1133">Transmembrane helix</keyword>
<keyword id="KW-0813">Transport</keyword>
<accession>P0AF99</accession>
<accession>P39340</accession>
<feature type="chain" id="PRO_0000169773" description="Lipopolysaccharide export system permease protein LptF">
    <location>
        <begin position="1"/>
        <end position="366"/>
    </location>
</feature>
<feature type="topological domain" description="Cytoplasmic" evidence="2">
    <location>
        <begin position="1"/>
        <end position="15"/>
    </location>
</feature>
<feature type="transmembrane region" description="Helical" evidence="2">
    <location>
        <begin position="16"/>
        <end position="36"/>
    </location>
</feature>
<feature type="topological domain" description="Periplasmic" evidence="2">
    <location>
        <begin position="37"/>
        <end position="53"/>
    </location>
</feature>
<feature type="transmembrane region" description="Helical" evidence="2">
    <location>
        <begin position="54"/>
        <end position="74"/>
    </location>
</feature>
<feature type="topological domain" description="Cytoplasmic" evidence="2">
    <location>
        <begin position="75"/>
        <end position="100"/>
    </location>
</feature>
<feature type="transmembrane region" description="Helical" evidence="2">
    <location>
        <begin position="101"/>
        <end position="121"/>
    </location>
</feature>
<feature type="topological domain" description="Periplasmic" evidence="2">
    <location>
        <begin position="122"/>
        <end position="269"/>
    </location>
</feature>
<feature type="transmembrane region" description="Helical" evidence="2">
    <location>
        <begin position="270"/>
        <end position="290"/>
    </location>
</feature>
<feature type="topological domain" description="Cytoplasmic" evidence="2">
    <location>
        <begin position="291"/>
        <end position="295"/>
    </location>
</feature>
<feature type="transmembrane region" description="Helical" evidence="2">
    <location>
        <begin position="296"/>
        <end position="316"/>
    </location>
</feature>
<feature type="topological domain" description="Periplasmic" evidence="2">
    <location>
        <begin position="317"/>
        <end position="327"/>
    </location>
</feature>
<feature type="transmembrane region" description="Helical" evidence="2">
    <location>
        <begin position="328"/>
        <end position="348"/>
    </location>
</feature>
<feature type="topological domain" description="Cytoplasmic" evidence="2">
    <location>
        <begin position="349"/>
        <end position="366"/>
    </location>
</feature>
<evidence type="ECO:0000250" key="1"/>
<evidence type="ECO:0000255" key="2"/>
<evidence type="ECO:0000305" key="3"/>
<protein>
    <recommendedName>
        <fullName>Lipopolysaccharide export system permease protein LptF</fullName>
    </recommendedName>
</protein>
<sequence>MIIIRYLVRETLKSQLAILFILLLIFFCQKLVRILGAAVDGDIPANLVLSLLGLGVPEMAQLILPLSLFLGLLMTLGKLYTESEITVMHACGLSKAVLVKAAMILAVFTAIVAAVNVMWAGPWSSRHQDEVLAEAKANPGMAALAQGQFQQATNGSSVLFIESVDGSDFKDVFLAQIRPKGNARPSVVVADSGHLTQLRDGSQVVTLNQGTRFEGTALLRDFRITDFQDYQAIIGHQAVALDPNDTDQMDMRTLWNTDTDRARAELNWRITLVFTVFMMALMVVPLSVVNPRQGRVLSMLPAMLLYLLFFLIQTSLKSNGGKGKLDPTLWMWTVNLIYLALAIVLNLWDTVPVRRLRASFSRKGAV</sequence>
<organism>
    <name type="scientific">Escherichia coli O6:H1 (strain CFT073 / ATCC 700928 / UPEC)</name>
    <dbReference type="NCBI Taxonomy" id="199310"/>
    <lineage>
        <taxon>Bacteria</taxon>
        <taxon>Pseudomonadati</taxon>
        <taxon>Pseudomonadota</taxon>
        <taxon>Gammaproteobacteria</taxon>
        <taxon>Enterobacterales</taxon>
        <taxon>Enterobacteriaceae</taxon>
        <taxon>Escherichia</taxon>
    </lineage>
</organism>
<proteinExistence type="inferred from homology"/>